<sequence length="443" mass="52504">MDEDSEVTQPQDQSCWATLPDVCLRRVFWWLGDRDRSRAALVCRKWNQIMYSADLWRYRTITFSGRPSRVHASEFESALWYVKKFGRYLEHLEIKFLNPYNAVLTKKFQVTMRGLLSCLGKSNNRLRSLSIQHLELDRLVWRNSIRGSLIKSLSFFLKKMGKHLDHLSLKGARLTVEQGCHILNSLSYMRNENVASELNIEDFFSHHLAVYGSSQFNKAMATFHNLTFLTLNYNCISDELLETLSENNAGTLRTMNIKCHVHDPHGQVVWGMSWAKLARQASNLKVNFFFERVMKYERLARILLQEIPVRSISLRSCYFSDPDWSMRPTLTDLLPTFRNTLQKLTFEFNNNHESLDEQLHLLILACRKLFYFKIWAFLDVKFVERILKSQEEGQCSLRTLKVRIYTNRYETNEEDRTLREIYRKYRKLIDSELNYFVIAYPMM</sequence>
<dbReference type="EMBL" id="BC082089">
    <property type="protein sequence ID" value="AAH82089.1"/>
    <property type="status" value="ALT_SEQ"/>
    <property type="molecule type" value="mRNA"/>
</dbReference>
<dbReference type="EMBL" id="BC100079">
    <property type="protein sequence ID" value="AAI00080.1"/>
    <property type="molecule type" value="mRNA"/>
</dbReference>
<dbReference type="RefSeq" id="NP_001034107.1">
    <property type="nucleotide sequence ID" value="NM_001039018.1"/>
</dbReference>
<dbReference type="RefSeq" id="XP_006246789.1">
    <property type="nucleotide sequence ID" value="XM_006246727.5"/>
</dbReference>
<dbReference type="RefSeq" id="XP_006246791.1">
    <property type="nucleotide sequence ID" value="XM_006246729.5"/>
</dbReference>
<dbReference type="RefSeq" id="XP_038941927.1">
    <property type="nucleotide sequence ID" value="XM_039085999.2"/>
</dbReference>
<dbReference type="SMR" id="Q66H10"/>
<dbReference type="FunCoup" id="Q66H10">
    <property type="interactions" value="146"/>
</dbReference>
<dbReference type="STRING" id="10116.ENSRNOP00000020071"/>
<dbReference type="PhosphoSitePlus" id="Q66H10"/>
<dbReference type="PaxDb" id="10116-ENSRNOP00000020071"/>
<dbReference type="Ensembl" id="ENSRNOT00000020071.5">
    <property type="protein sequence ID" value="ENSRNOP00000020071.2"/>
    <property type="gene ID" value="ENSRNOG00000014953.7"/>
</dbReference>
<dbReference type="GeneID" id="303287"/>
<dbReference type="KEGG" id="rno:303287"/>
<dbReference type="AGR" id="RGD:1311464"/>
<dbReference type="CTD" id="162517"/>
<dbReference type="RGD" id="1311464">
    <property type="gene designation" value="Fbxo39"/>
</dbReference>
<dbReference type="eggNOG" id="KOG1947">
    <property type="taxonomic scope" value="Eukaryota"/>
</dbReference>
<dbReference type="GeneTree" id="ENSGT00510000048837"/>
<dbReference type="HOGENOM" id="CLU_050223_0_0_1"/>
<dbReference type="InParanoid" id="Q66H10"/>
<dbReference type="OMA" id="MATFHNL"/>
<dbReference type="OrthoDB" id="61560at2759"/>
<dbReference type="PhylomeDB" id="Q66H10"/>
<dbReference type="TreeFam" id="TF321665"/>
<dbReference type="PRO" id="PR:Q66H10"/>
<dbReference type="Proteomes" id="UP000002494">
    <property type="component" value="Chromosome 10"/>
</dbReference>
<dbReference type="Bgee" id="ENSRNOG00000014953">
    <property type="expression patterns" value="Expressed in testis and 11 other cell types or tissues"/>
</dbReference>
<dbReference type="GO" id="GO:0019005">
    <property type="term" value="C:SCF ubiquitin ligase complex"/>
    <property type="evidence" value="ECO:0000318"/>
    <property type="project" value="GO_Central"/>
</dbReference>
<dbReference type="GO" id="GO:0031146">
    <property type="term" value="P:SCF-dependent proteasomal ubiquitin-dependent protein catabolic process"/>
    <property type="evidence" value="ECO:0000318"/>
    <property type="project" value="GO_Central"/>
</dbReference>
<dbReference type="CDD" id="cd22108">
    <property type="entry name" value="F-box_FBXO39"/>
    <property type="match status" value="1"/>
</dbReference>
<dbReference type="FunFam" id="1.20.1280.50:FF:000027">
    <property type="entry name" value="F-box only protein 39"/>
    <property type="match status" value="1"/>
</dbReference>
<dbReference type="FunFam" id="3.80.10.10:FF:000237">
    <property type="entry name" value="F-box only protein 39"/>
    <property type="match status" value="1"/>
</dbReference>
<dbReference type="Gene3D" id="1.20.1280.50">
    <property type="match status" value="1"/>
</dbReference>
<dbReference type="Gene3D" id="3.80.10.10">
    <property type="entry name" value="Ribonuclease Inhibitor"/>
    <property type="match status" value="1"/>
</dbReference>
<dbReference type="InterPro" id="IPR036047">
    <property type="entry name" value="F-box-like_dom_sf"/>
</dbReference>
<dbReference type="InterPro" id="IPR001810">
    <property type="entry name" value="F-box_dom"/>
</dbReference>
<dbReference type="InterPro" id="IPR045048">
    <property type="entry name" value="FBXO31/39"/>
</dbReference>
<dbReference type="InterPro" id="IPR032675">
    <property type="entry name" value="LRR_dom_sf"/>
</dbReference>
<dbReference type="PANTHER" id="PTHR10706">
    <property type="entry name" value="F-BOX FAMILY PROTEIN"/>
    <property type="match status" value="1"/>
</dbReference>
<dbReference type="PANTHER" id="PTHR10706:SF160">
    <property type="entry name" value="F-BOX ONLY PROTEIN 39"/>
    <property type="match status" value="1"/>
</dbReference>
<dbReference type="Pfam" id="PF12937">
    <property type="entry name" value="F-box-like"/>
    <property type="match status" value="1"/>
</dbReference>
<dbReference type="SUPFAM" id="SSF81383">
    <property type="entry name" value="F-box domain"/>
    <property type="match status" value="1"/>
</dbReference>
<dbReference type="SUPFAM" id="SSF52047">
    <property type="entry name" value="RNI-like"/>
    <property type="match status" value="1"/>
</dbReference>
<dbReference type="PROSITE" id="PS50181">
    <property type="entry name" value="FBOX"/>
    <property type="match status" value="1"/>
</dbReference>
<reference key="1">
    <citation type="journal article" date="2004" name="Genome Res.">
        <title>The status, quality, and expansion of the NIH full-length cDNA project: the Mammalian Gene Collection (MGC).</title>
        <authorList>
            <consortium name="The MGC Project Team"/>
        </authorList>
    </citation>
    <scope>NUCLEOTIDE SEQUENCE [LARGE SCALE MRNA]</scope>
    <source>
        <tissue>Testis</tissue>
    </source>
</reference>
<comment type="function">
    <text evidence="1">Substrate-recognition component of the SCF (SKP1-CUL1-F-box protein)-type E3 ubiquitin ligase complex.</text>
</comment>
<comment type="subunit">
    <text evidence="1">Directly interacts with SKP1 and CUL1.</text>
</comment>
<comment type="sequence caution" evidence="3">
    <conflict type="miscellaneous discrepancy">
        <sequence resource="EMBL-CDS" id="AAH82089"/>
    </conflict>
    <text>Contaminating sequence. Potential poly-A sequence.</text>
</comment>
<feature type="chain" id="PRO_0000119937" description="F-box only protein 39">
    <location>
        <begin position="1"/>
        <end position="443"/>
    </location>
</feature>
<feature type="domain" description="F-box" evidence="2">
    <location>
        <begin position="13"/>
        <end position="59"/>
    </location>
</feature>
<accession>Q66H10</accession>
<accession>Q498T6</accession>
<organism>
    <name type="scientific">Rattus norvegicus</name>
    <name type="common">Rat</name>
    <dbReference type="NCBI Taxonomy" id="10116"/>
    <lineage>
        <taxon>Eukaryota</taxon>
        <taxon>Metazoa</taxon>
        <taxon>Chordata</taxon>
        <taxon>Craniata</taxon>
        <taxon>Vertebrata</taxon>
        <taxon>Euteleostomi</taxon>
        <taxon>Mammalia</taxon>
        <taxon>Eutheria</taxon>
        <taxon>Euarchontoglires</taxon>
        <taxon>Glires</taxon>
        <taxon>Rodentia</taxon>
        <taxon>Myomorpha</taxon>
        <taxon>Muroidea</taxon>
        <taxon>Muridae</taxon>
        <taxon>Murinae</taxon>
        <taxon>Rattus</taxon>
    </lineage>
</organism>
<gene>
    <name type="primary">Fbxo39</name>
</gene>
<evidence type="ECO:0000250" key="1"/>
<evidence type="ECO:0000255" key="2">
    <source>
        <dbReference type="PROSITE-ProRule" id="PRU00080"/>
    </source>
</evidence>
<evidence type="ECO:0000305" key="3"/>
<name>FBX39_RAT</name>
<keyword id="KW-1185">Reference proteome</keyword>
<keyword id="KW-0833">Ubl conjugation pathway</keyword>
<proteinExistence type="evidence at transcript level"/>
<protein>
    <recommendedName>
        <fullName>F-box only protein 39</fullName>
    </recommendedName>
</protein>